<keyword id="KW-0067">ATP-binding</keyword>
<keyword id="KW-0173">Coenzyme A biosynthesis</keyword>
<keyword id="KW-0963">Cytoplasm</keyword>
<keyword id="KW-0418">Kinase</keyword>
<keyword id="KW-0547">Nucleotide-binding</keyword>
<keyword id="KW-0808">Transferase</keyword>
<dbReference type="EC" id="2.7.1.33" evidence="1"/>
<dbReference type="EMBL" id="CP000511">
    <property type="protein sequence ID" value="ABM15433.1"/>
    <property type="molecule type" value="Genomic_DNA"/>
</dbReference>
<dbReference type="RefSeq" id="WP_011781808.1">
    <property type="nucleotide sequence ID" value="NZ_JACKSD010000119.1"/>
</dbReference>
<dbReference type="SMR" id="A1TE33"/>
<dbReference type="STRING" id="350058.Mvan_4658"/>
<dbReference type="KEGG" id="mva:Mvan_4658"/>
<dbReference type="eggNOG" id="COG0572">
    <property type="taxonomic scope" value="Bacteria"/>
</dbReference>
<dbReference type="HOGENOM" id="CLU_053818_1_1_11"/>
<dbReference type="UniPathway" id="UPA00241">
    <property type="reaction ID" value="UER00352"/>
</dbReference>
<dbReference type="Proteomes" id="UP000009159">
    <property type="component" value="Chromosome"/>
</dbReference>
<dbReference type="GO" id="GO:0005737">
    <property type="term" value="C:cytoplasm"/>
    <property type="evidence" value="ECO:0007669"/>
    <property type="project" value="UniProtKB-SubCell"/>
</dbReference>
<dbReference type="GO" id="GO:0005524">
    <property type="term" value="F:ATP binding"/>
    <property type="evidence" value="ECO:0007669"/>
    <property type="project" value="UniProtKB-UniRule"/>
</dbReference>
<dbReference type="GO" id="GO:0004594">
    <property type="term" value="F:pantothenate kinase activity"/>
    <property type="evidence" value="ECO:0007669"/>
    <property type="project" value="UniProtKB-UniRule"/>
</dbReference>
<dbReference type="GO" id="GO:0015937">
    <property type="term" value="P:coenzyme A biosynthetic process"/>
    <property type="evidence" value="ECO:0007669"/>
    <property type="project" value="UniProtKB-UniRule"/>
</dbReference>
<dbReference type="CDD" id="cd02025">
    <property type="entry name" value="PanK"/>
    <property type="match status" value="1"/>
</dbReference>
<dbReference type="FunFam" id="3.40.50.300:FF:000242">
    <property type="entry name" value="Pantothenate kinase"/>
    <property type="match status" value="1"/>
</dbReference>
<dbReference type="Gene3D" id="3.40.50.300">
    <property type="entry name" value="P-loop containing nucleotide triphosphate hydrolases"/>
    <property type="match status" value="1"/>
</dbReference>
<dbReference type="HAMAP" id="MF_00215">
    <property type="entry name" value="Pantothen_kinase_1"/>
    <property type="match status" value="1"/>
</dbReference>
<dbReference type="InterPro" id="IPR027417">
    <property type="entry name" value="P-loop_NTPase"/>
</dbReference>
<dbReference type="InterPro" id="IPR004566">
    <property type="entry name" value="PanK"/>
</dbReference>
<dbReference type="InterPro" id="IPR006083">
    <property type="entry name" value="PRK/URK"/>
</dbReference>
<dbReference type="NCBIfam" id="TIGR00554">
    <property type="entry name" value="panK_bact"/>
    <property type="match status" value="1"/>
</dbReference>
<dbReference type="PANTHER" id="PTHR10285">
    <property type="entry name" value="URIDINE KINASE"/>
    <property type="match status" value="1"/>
</dbReference>
<dbReference type="Pfam" id="PF00485">
    <property type="entry name" value="PRK"/>
    <property type="match status" value="1"/>
</dbReference>
<dbReference type="PIRSF" id="PIRSF000545">
    <property type="entry name" value="Pantothenate_kin"/>
    <property type="match status" value="1"/>
</dbReference>
<dbReference type="SUPFAM" id="SSF52540">
    <property type="entry name" value="P-loop containing nucleoside triphosphate hydrolases"/>
    <property type="match status" value="1"/>
</dbReference>
<feature type="chain" id="PRO_1000043234" description="Pantothenate kinase">
    <location>
        <begin position="1"/>
        <end position="312"/>
    </location>
</feature>
<feature type="binding site" evidence="1">
    <location>
        <begin position="97"/>
        <end position="104"/>
    </location>
    <ligand>
        <name>ATP</name>
        <dbReference type="ChEBI" id="CHEBI:30616"/>
    </ligand>
</feature>
<sequence>MARLSEPSPYVEFDRTQWRALRMSTPLKLTEDELVRLRGLGEKIDLLEVEEVYLPLARLIHLQVAARQALFATTAQFLGEPQQNPDRPVPFIIGVAGSVAVGKSTTARVLQALLARWEHHPRVDLVTTDGFLYSNSELSRRNLMHRKGFPESYDRRGLMRFVTAIKSGADAACAPVYSHLLYDIVAGEKQIIEHPDILILEGLNVLQTGPALMVSDLFDFSVYVDARIEDIENWYISRFLSMRAGAFADPASHFHHYSTLTDEQAVFAARDIWHSINRPNLIENILPTRPRATLVLRKDSDHSINRLRLRKL</sequence>
<accession>A1TE33</accession>
<reference key="1">
    <citation type="submission" date="2006-12" db="EMBL/GenBank/DDBJ databases">
        <title>Complete sequence of Mycobacterium vanbaalenii PYR-1.</title>
        <authorList>
            <consortium name="US DOE Joint Genome Institute"/>
            <person name="Copeland A."/>
            <person name="Lucas S."/>
            <person name="Lapidus A."/>
            <person name="Barry K."/>
            <person name="Detter J.C."/>
            <person name="Glavina del Rio T."/>
            <person name="Hammon N."/>
            <person name="Israni S."/>
            <person name="Dalin E."/>
            <person name="Tice H."/>
            <person name="Pitluck S."/>
            <person name="Singan V."/>
            <person name="Schmutz J."/>
            <person name="Larimer F."/>
            <person name="Land M."/>
            <person name="Hauser L."/>
            <person name="Kyrpides N."/>
            <person name="Anderson I.J."/>
            <person name="Miller C."/>
            <person name="Richardson P."/>
        </authorList>
    </citation>
    <scope>NUCLEOTIDE SEQUENCE [LARGE SCALE GENOMIC DNA]</scope>
    <source>
        <strain>DSM 7251 / JCM 13017 / BCRC 16820 / KCTC 9966 / NRRL B-24157 / PYR-1</strain>
    </source>
</reference>
<name>COAA_MYCVP</name>
<organism>
    <name type="scientific">Mycolicibacterium vanbaalenii (strain DSM 7251 / JCM 13017 / BCRC 16820 / KCTC 9966 / NRRL B-24157 / PYR-1)</name>
    <name type="common">Mycobacterium vanbaalenii</name>
    <dbReference type="NCBI Taxonomy" id="350058"/>
    <lineage>
        <taxon>Bacteria</taxon>
        <taxon>Bacillati</taxon>
        <taxon>Actinomycetota</taxon>
        <taxon>Actinomycetes</taxon>
        <taxon>Mycobacteriales</taxon>
        <taxon>Mycobacteriaceae</taxon>
        <taxon>Mycolicibacterium</taxon>
    </lineage>
</organism>
<evidence type="ECO:0000255" key="1">
    <source>
        <dbReference type="HAMAP-Rule" id="MF_00215"/>
    </source>
</evidence>
<proteinExistence type="inferred from homology"/>
<comment type="catalytic activity">
    <reaction evidence="1">
        <text>(R)-pantothenate + ATP = (R)-4'-phosphopantothenate + ADP + H(+)</text>
        <dbReference type="Rhea" id="RHEA:16373"/>
        <dbReference type="ChEBI" id="CHEBI:10986"/>
        <dbReference type="ChEBI" id="CHEBI:15378"/>
        <dbReference type="ChEBI" id="CHEBI:29032"/>
        <dbReference type="ChEBI" id="CHEBI:30616"/>
        <dbReference type="ChEBI" id="CHEBI:456216"/>
        <dbReference type="EC" id="2.7.1.33"/>
    </reaction>
</comment>
<comment type="pathway">
    <text evidence="1">Cofactor biosynthesis; coenzyme A biosynthesis; CoA from (R)-pantothenate: step 1/5.</text>
</comment>
<comment type="subcellular location">
    <subcellularLocation>
        <location evidence="1">Cytoplasm</location>
    </subcellularLocation>
</comment>
<comment type="similarity">
    <text evidence="1">Belongs to the prokaryotic pantothenate kinase family.</text>
</comment>
<protein>
    <recommendedName>
        <fullName evidence="1">Pantothenate kinase</fullName>
        <ecNumber evidence="1">2.7.1.33</ecNumber>
    </recommendedName>
    <alternativeName>
        <fullName evidence="1">Pantothenic acid kinase</fullName>
    </alternativeName>
</protein>
<gene>
    <name evidence="1" type="primary">coaA</name>
    <name type="ordered locus">Mvan_4658</name>
</gene>